<accession>Q69ZK7</accession>
<accession>E9PX00</accession>
<accession>Q8K0I6</accession>
<accession>Q8K266</accession>
<comment type="function">
    <text evidence="3">Transcription regulator that syncronizes transcriptional and translational programs to promote macrophage invasion of tissues.</text>
</comment>
<comment type="subcellular location">
    <subcellularLocation>
        <location evidence="1">Nucleus</location>
    </subcellularLocation>
</comment>
<comment type="alternative products">
    <event type="alternative splicing"/>
    <isoform>
        <id>Q69ZK7-1</id>
        <name>1</name>
        <sequence type="displayed"/>
    </isoform>
    <isoform>
        <id>Q69ZK7-2</id>
        <name>2</name>
        <sequence type="described" ref="VSP_030582"/>
    </isoform>
</comment>
<comment type="domain">
    <text evidence="5">The protein contains 2 transactivation domains (TAD). Each of these domains may be required for transcriptional activation of a subset of target genes.</text>
</comment>
<comment type="similarity">
    <text evidence="5">Belongs to the ATOS family.</text>
</comment>
<comment type="sequence caution" evidence="5">
    <conflict type="erroneous initiation">
        <sequence resource="EMBL-CDS" id="AAH32966"/>
    </conflict>
    <text>Truncated N-terminus.</text>
</comment>
<comment type="sequence caution" evidence="5">
    <conflict type="erroneous initiation">
        <sequence resource="EMBL-CDS" id="BAD32439"/>
    </conflict>
    <text>Extended N-terminus.</text>
</comment>
<protein>
    <recommendedName>
        <fullName>Atos homolog protein A</fullName>
    </recommendedName>
</protein>
<organism>
    <name type="scientific">Mus musculus</name>
    <name type="common">Mouse</name>
    <dbReference type="NCBI Taxonomy" id="10090"/>
    <lineage>
        <taxon>Eukaryota</taxon>
        <taxon>Metazoa</taxon>
        <taxon>Chordata</taxon>
        <taxon>Craniata</taxon>
        <taxon>Vertebrata</taxon>
        <taxon>Euteleostomi</taxon>
        <taxon>Mammalia</taxon>
        <taxon>Eutheria</taxon>
        <taxon>Euarchontoglires</taxon>
        <taxon>Glires</taxon>
        <taxon>Rodentia</taxon>
        <taxon>Myomorpha</taxon>
        <taxon>Muroidea</taxon>
        <taxon>Muridae</taxon>
        <taxon>Murinae</taxon>
        <taxon>Mus</taxon>
        <taxon>Mus</taxon>
    </lineage>
</organism>
<keyword id="KW-0025">Alternative splicing</keyword>
<keyword id="KW-0539">Nucleus</keyword>
<keyword id="KW-1185">Reference proteome</keyword>
<evidence type="ECO:0000250" key="1">
    <source>
        <dbReference type="UniProtKB" id="Q7JXG9"/>
    </source>
</evidence>
<evidence type="ECO:0000256" key="2">
    <source>
        <dbReference type="SAM" id="MobiDB-lite"/>
    </source>
</evidence>
<evidence type="ECO:0000269" key="3">
    <source>
    </source>
</evidence>
<evidence type="ECO:0000303" key="4">
    <source>
    </source>
</evidence>
<evidence type="ECO:0000305" key="5"/>
<name>ATOSA_MOUSE</name>
<feature type="chain" id="PRO_0000315614" description="Atos homolog protein A">
    <location>
        <begin position="1"/>
        <end position="1075"/>
    </location>
</feature>
<feature type="region of interest" description="Transactivation domain 1 (TAD1)" evidence="3">
    <location>
        <begin position="24"/>
        <end position="32"/>
    </location>
</feature>
<feature type="region of interest" description="Disordered" evidence="2">
    <location>
        <begin position="430"/>
        <end position="469"/>
    </location>
</feature>
<feature type="region of interest" description="Disordered" evidence="2">
    <location>
        <begin position="570"/>
        <end position="592"/>
    </location>
</feature>
<feature type="region of interest" description="Disordered" evidence="2">
    <location>
        <begin position="703"/>
        <end position="766"/>
    </location>
</feature>
<feature type="region of interest" description="Required for macropage invasion" evidence="3">
    <location>
        <begin position="878"/>
        <end position="935"/>
    </location>
</feature>
<feature type="region of interest" description="Transactivation domain 2 (TAD2)" evidence="3">
    <location>
        <begin position="962"/>
        <end position="970"/>
    </location>
</feature>
<feature type="compositionally biased region" description="Basic and acidic residues" evidence="2">
    <location>
        <begin position="440"/>
        <end position="454"/>
    </location>
</feature>
<feature type="compositionally biased region" description="Polar residues" evidence="2">
    <location>
        <begin position="703"/>
        <end position="712"/>
    </location>
</feature>
<feature type="compositionally biased region" description="Basic and acidic residues" evidence="2">
    <location>
        <begin position="746"/>
        <end position="759"/>
    </location>
</feature>
<feature type="splice variant" id="VSP_030582" description="In isoform 2." evidence="4">
    <original>MKPDR</original>
    <variation>MVFSGNKGLRRQ</variation>
    <location>
        <begin position="1"/>
        <end position="5"/>
    </location>
</feature>
<feature type="sequence conflict" description="In Ref. 3; AAH31353." evidence="5" ref="3">
    <original>Y</original>
    <variation>F</variation>
    <location>
        <position position="100"/>
    </location>
</feature>
<feature type="sequence conflict" description="In Ref. 1; BAD32439." evidence="5" ref="1">
    <original>K</original>
    <variation>N</variation>
    <location>
        <position position="617"/>
    </location>
</feature>
<feature type="sequence conflict" description="In Ref. 1; BAD32439." evidence="5" ref="1">
    <original>Q</original>
    <variation>H</variation>
    <location>
        <position position="658"/>
    </location>
</feature>
<feature type="sequence conflict" description="In Ref. 3; AAH32966." evidence="5" ref="3">
    <original>C</original>
    <variation>Y</variation>
    <location>
        <position position="710"/>
    </location>
</feature>
<dbReference type="EMBL" id="AK173161">
    <property type="protein sequence ID" value="BAD32439.1"/>
    <property type="status" value="ALT_INIT"/>
    <property type="molecule type" value="Transcribed_RNA"/>
</dbReference>
<dbReference type="EMBL" id="CT025657">
    <property type="status" value="NOT_ANNOTATED_CDS"/>
    <property type="molecule type" value="Genomic_DNA"/>
</dbReference>
<dbReference type="EMBL" id="CT033761">
    <property type="status" value="NOT_ANNOTATED_CDS"/>
    <property type="molecule type" value="Genomic_DNA"/>
</dbReference>
<dbReference type="EMBL" id="BC031353">
    <property type="protein sequence ID" value="AAH31353.1"/>
    <property type="molecule type" value="mRNA"/>
</dbReference>
<dbReference type="EMBL" id="BC032966">
    <property type="protein sequence ID" value="AAH32966.1"/>
    <property type="status" value="ALT_INIT"/>
    <property type="molecule type" value="mRNA"/>
</dbReference>
<dbReference type="CCDS" id="CCDS52857.1">
    <molecule id="Q69ZK7-1"/>
</dbReference>
<dbReference type="CCDS" id="CCDS52858.1">
    <molecule id="Q69ZK7-2"/>
</dbReference>
<dbReference type="RefSeq" id="NP_001106754.1">
    <molecule id="Q69ZK7-1"/>
    <property type="nucleotide sequence ID" value="NM_001113283.1"/>
</dbReference>
<dbReference type="RefSeq" id="NP_001346745.1">
    <molecule id="Q69ZK7-1"/>
    <property type="nucleotide sequence ID" value="NM_001359816.1"/>
</dbReference>
<dbReference type="RefSeq" id="NP_705812.2">
    <molecule id="Q69ZK7-2"/>
    <property type="nucleotide sequence ID" value="NM_153584.2"/>
</dbReference>
<dbReference type="RefSeq" id="XP_006511189.1">
    <molecule id="Q69ZK7-1"/>
    <property type="nucleotide sequence ID" value="XM_006511126.5"/>
</dbReference>
<dbReference type="RefSeq" id="XP_006511190.1">
    <property type="nucleotide sequence ID" value="XM_006511127.3"/>
</dbReference>
<dbReference type="BioGRID" id="231670">
    <property type="interactions" value="1"/>
</dbReference>
<dbReference type="FunCoup" id="Q69ZK7">
    <property type="interactions" value="52"/>
</dbReference>
<dbReference type="STRING" id="10090.ENSMUSP00000080442"/>
<dbReference type="iPTMnet" id="Q69ZK7"/>
<dbReference type="PhosphoSitePlus" id="Q69ZK7"/>
<dbReference type="jPOST" id="Q69ZK7"/>
<dbReference type="PaxDb" id="10090-ENSMUSP00000080442"/>
<dbReference type="PeptideAtlas" id="Q69ZK7"/>
<dbReference type="ProteomicsDB" id="275826">
    <molecule id="Q69ZK7-1"/>
</dbReference>
<dbReference type="ProteomicsDB" id="275827">
    <molecule id="Q69ZK7-2"/>
</dbReference>
<dbReference type="Antibodypedia" id="51855">
    <property type="antibodies" value="16 antibodies from 6 providers"/>
</dbReference>
<dbReference type="Ensembl" id="ENSMUST00000081746.7">
    <molecule id="Q69ZK7-2"/>
    <property type="protein sequence ID" value="ENSMUSP00000080442.6"/>
    <property type="gene ID" value="ENSMUSG00000034858.18"/>
</dbReference>
<dbReference type="Ensembl" id="ENSMUST00000170846.9">
    <molecule id="Q69ZK7-1"/>
    <property type="protein sequence ID" value="ENSMUSP00000129319.2"/>
    <property type="gene ID" value="ENSMUSG00000034858.18"/>
</dbReference>
<dbReference type="Ensembl" id="ENSMUST00000215370.3">
    <molecule id="Q69ZK7-1"/>
    <property type="protein sequence ID" value="ENSMUSP00000149021.2"/>
    <property type="gene ID" value="ENSMUSG00000034858.18"/>
</dbReference>
<dbReference type="GeneID" id="235493"/>
<dbReference type="KEGG" id="mmu:235493"/>
<dbReference type="UCSC" id="uc009qrl.2">
    <molecule id="Q69ZK7-2"/>
    <property type="organism name" value="mouse"/>
</dbReference>
<dbReference type="UCSC" id="uc012gww.1">
    <molecule id="Q69ZK7-1"/>
    <property type="organism name" value="mouse"/>
</dbReference>
<dbReference type="AGR" id="MGI:2387648"/>
<dbReference type="CTD" id="56204"/>
<dbReference type="MGI" id="MGI:2387648">
    <property type="gene designation" value="Atosa"/>
</dbReference>
<dbReference type="VEuPathDB" id="HostDB:ENSMUSG00000034858"/>
<dbReference type="eggNOG" id="KOG2306">
    <property type="taxonomic scope" value="Eukaryota"/>
</dbReference>
<dbReference type="GeneTree" id="ENSGT00940000157573"/>
<dbReference type="HOGENOM" id="CLU_011957_0_0_1"/>
<dbReference type="InParanoid" id="Q69ZK7"/>
<dbReference type="OMA" id="QTHPRSQ"/>
<dbReference type="OrthoDB" id="31763at9989"/>
<dbReference type="TreeFam" id="TF325496"/>
<dbReference type="BioGRID-ORCS" id="235493">
    <property type="hits" value="3 hits in 76 CRISPR screens"/>
</dbReference>
<dbReference type="ChiTaRS" id="Fam214a">
    <property type="organism name" value="mouse"/>
</dbReference>
<dbReference type="PRO" id="PR:Q69ZK7"/>
<dbReference type="Proteomes" id="UP000000589">
    <property type="component" value="Chromosome 9"/>
</dbReference>
<dbReference type="RNAct" id="Q69ZK7">
    <property type="molecule type" value="protein"/>
</dbReference>
<dbReference type="Bgee" id="ENSMUSG00000034858">
    <property type="expression patterns" value="Expressed in otolith organ and 251 other cell types or tissues"/>
</dbReference>
<dbReference type="ExpressionAtlas" id="Q69ZK7">
    <property type="expression patterns" value="baseline and differential"/>
</dbReference>
<dbReference type="GO" id="GO:0005634">
    <property type="term" value="C:nucleus"/>
    <property type="evidence" value="ECO:0007669"/>
    <property type="project" value="UniProtKB-SubCell"/>
</dbReference>
<dbReference type="InterPro" id="IPR033473">
    <property type="entry name" value="Atos-like_C"/>
</dbReference>
<dbReference type="InterPro" id="IPR025261">
    <property type="entry name" value="Atos-like_cons_dom"/>
</dbReference>
<dbReference type="InterPro" id="IPR051506">
    <property type="entry name" value="ATOS_Transcription_Regulators"/>
</dbReference>
<dbReference type="PANTHER" id="PTHR13199:SF13">
    <property type="entry name" value="ATOS HOMOLOG PROTEIN A"/>
    <property type="match status" value="1"/>
</dbReference>
<dbReference type="PANTHER" id="PTHR13199">
    <property type="entry name" value="GH03947P"/>
    <property type="match status" value="1"/>
</dbReference>
<dbReference type="Pfam" id="PF13889">
    <property type="entry name" value="Chromosome_seg"/>
    <property type="match status" value="1"/>
</dbReference>
<dbReference type="Pfam" id="PF13915">
    <property type="entry name" value="DUF4210"/>
    <property type="match status" value="1"/>
</dbReference>
<dbReference type="SMART" id="SM01177">
    <property type="entry name" value="DUF4210"/>
    <property type="match status" value="1"/>
</dbReference>
<sequence>MKPDRDALDEYFEYDAEEFLVSLALLITEGRTPECSVKGRAESFHCPPAQSRFPGTARHECSDKLAQCRQARRTRSEVTLLWKNNLPIMVEVMLLPDCCYSDEGPSTEGADLNDPAIKQDALLLERWILEPVPRQNGDRFIEEKALLLAVRSFVFFSQLSAWLSVSHGAIPRNILYRISAADVDLQWSFSQTPTEHVFPVPNVSHNVALKVSVQSLPRQAHYPVLTCSIHTNIGLYEKRIQEQELRACQHHGPGEVEYRCPSSSQSLCSKHTWTMAPVSALHVRSGMPPEYTAAIRNVRLCPGTGSKSDQGAPQASVLGFSGTGGEVRSQEASVRTFKSLPVVDSSVSSCQSSRQPVGEPNPLMDSLIQDRQEVIARIAQHLIHCDPSSSRMSELPFNTQESTSLSPKLHPVSQESGCVRRYKEAFSVSFGSPEFGSPGDSREGKVREKSETRPGETCTSHSLYPRQPAGEANPLIGSLLQERQDVIARIAQHLEHIDPAAHIPRPAFSKHDSNSIPSKVFRSSFDDKTLLKKGRENVSVSVSHTEVSLLGDRGDGESLKPSKCLRSFKYSPQEKPLKPEVRTQHQNHPDSITPTARQELLNKAAGLLTSSNTALCKESSLGLVSRLESTSCKLQLKEQEMSHETEKQCLHCNSIDKQICTNTCTEKINDEHSPGSLRHLQCDDSKGIDSKLKVTLLEMPDSLNKNKTNCSSKDSKRSKTCEQSIRVGTENDLSEENEGPGSTVSDRLKTEQEAKRDSGAGKPHSVKHCLSAGERLHSADMLRTTLKHSSVWRKHNFHSLDGTSTRAFHPQTGLPLLSSPVPQRKTQSGCFDLDASLLHLRSLSSKSSRPCLNIDEDPDVHEKPFLSSSAPPITSLSLLGNFEESVLNYRLDPLGIVDGFTAEVGASGTFCPTHLTLPVEVSFYSVSDDNAPSPYMGVITLESLGKRGYRVPPSGTIQVTLFNPNKTVVKMFVVVYDLRGMPANHQTFLRQRTFSVPVKQEMKRSINKENVQHTAQLLRYLIHLRFQSSKSGKIYLHRDVRLLFSRKSMEVDSGAAYELKSYTESPTNPQFSPRC</sequence>
<gene>
    <name type="primary">Atosa</name>
    <name type="synonym">Fam214a</name>
    <name type="synonym">Kiaa1370</name>
</gene>
<reference key="1">
    <citation type="journal article" date="2004" name="DNA Res.">
        <title>Prediction of the coding sequences of mouse homologues of KIAA gene: IV. The complete nucleotide sequences of 500 mouse KIAA-homologous cDNAs identified by screening of terminal sequences of cDNA clones randomly sampled from size-fractionated libraries.</title>
        <authorList>
            <person name="Okazaki N."/>
            <person name="Kikuno R."/>
            <person name="Ohara R."/>
            <person name="Inamoto S."/>
            <person name="Koseki H."/>
            <person name="Hiraoka S."/>
            <person name="Saga Y."/>
            <person name="Seino S."/>
            <person name="Nishimura M."/>
            <person name="Kaisho T."/>
            <person name="Hoshino K."/>
            <person name="Kitamura H."/>
            <person name="Nagase T."/>
            <person name="Ohara O."/>
            <person name="Koga H."/>
        </authorList>
    </citation>
    <scope>NUCLEOTIDE SEQUENCE [LARGE SCALE MRNA] (ISOFORM 1)</scope>
    <source>
        <tissue>Brain</tissue>
    </source>
</reference>
<reference key="2">
    <citation type="journal article" date="2009" name="PLoS Biol.">
        <title>Lineage-specific biology revealed by a finished genome assembly of the mouse.</title>
        <authorList>
            <person name="Church D.M."/>
            <person name="Goodstadt L."/>
            <person name="Hillier L.W."/>
            <person name="Zody M.C."/>
            <person name="Goldstein S."/>
            <person name="She X."/>
            <person name="Bult C.J."/>
            <person name="Agarwala R."/>
            <person name="Cherry J.L."/>
            <person name="DiCuccio M."/>
            <person name="Hlavina W."/>
            <person name="Kapustin Y."/>
            <person name="Meric P."/>
            <person name="Maglott D."/>
            <person name="Birtle Z."/>
            <person name="Marques A.C."/>
            <person name="Graves T."/>
            <person name="Zhou S."/>
            <person name="Teague B."/>
            <person name="Potamousis K."/>
            <person name="Churas C."/>
            <person name="Place M."/>
            <person name="Herschleb J."/>
            <person name="Runnheim R."/>
            <person name="Forrest D."/>
            <person name="Amos-Landgraf J."/>
            <person name="Schwartz D.C."/>
            <person name="Cheng Z."/>
            <person name="Lindblad-Toh K."/>
            <person name="Eichler E.E."/>
            <person name="Ponting C.P."/>
        </authorList>
    </citation>
    <scope>NUCLEOTIDE SEQUENCE [LARGE SCALE GENOMIC DNA]</scope>
    <source>
        <strain>C57BL/6J</strain>
    </source>
</reference>
<reference key="3">
    <citation type="journal article" date="2004" name="Genome Res.">
        <title>The status, quality, and expansion of the NIH full-length cDNA project: the Mammalian Gene Collection (MGC).</title>
        <authorList>
            <consortium name="The MGC Project Team"/>
        </authorList>
    </citation>
    <scope>NUCLEOTIDE SEQUENCE [LARGE SCALE MRNA] (ISOFORM 2)</scope>
    <source>
        <strain>C57BL/6J</strain>
        <tissue>Mammary gland</tissue>
        <tissue>Retina</tissue>
    </source>
</reference>
<reference key="4">
    <citation type="journal article" date="2022" name="EMBO J.">
        <title>Macrophage mitochondrial bioenergetics and tissue invasion are boosted by an Atossa-Porthos axis in Drosophila.</title>
        <authorList>
            <person name="Emtenani S."/>
            <person name="Martin E.T."/>
            <person name="Gyoergy A."/>
            <person name="Bicher J."/>
            <person name="Genger J.W."/>
            <person name="Koecher T."/>
            <person name="Akhmanova M."/>
            <person name="Guarda M."/>
            <person name="Roblek M."/>
            <person name="Bergthaler A."/>
            <person name="Hurd T.R."/>
            <person name="Rangan P."/>
            <person name="Siekhaus D.E."/>
        </authorList>
    </citation>
    <scope>FUNCTION</scope>
    <scope>DOMAIN</scope>
</reference>
<proteinExistence type="evidence at transcript level"/>